<protein>
    <recommendedName>
        <fullName evidence="1">Probable potassium transport system protein Kup</fullName>
    </recommendedName>
</protein>
<dbReference type="EMBL" id="CP000628">
    <property type="protein sequence ID" value="ACM25643.1"/>
    <property type="molecule type" value="Genomic_DNA"/>
</dbReference>
<dbReference type="RefSeq" id="WP_012651025.1">
    <property type="nucleotide sequence ID" value="NC_011985.1"/>
</dbReference>
<dbReference type="SMR" id="B9JA25"/>
<dbReference type="STRING" id="311403.Arad_1113"/>
<dbReference type="KEGG" id="ara:Arad_1113"/>
<dbReference type="eggNOG" id="COG3158">
    <property type="taxonomic scope" value="Bacteria"/>
</dbReference>
<dbReference type="HOGENOM" id="CLU_008142_4_2_5"/>
<dbReference type="Proteomes" id="UP000001600">
    <property type="component" value="Chromosome 1"/>
</dbReference>
<dbReference type="GO" id="GO:0005886">
    <property type="term" value="C:plasma membrane"/>
    <property type="evidence" value="ECO:0007669"/>
    <property type="project" value="UniProtKB-SubCell"/>
</dbReference>
<dbReference type="GO" id="GO:0015079">
    <property type="term" value="F:potassium ion transmembrane transporter activity"/>
    <property type="evidence" value="ECO:0007669"/>
    <property type="project" value="UniProtKB-UniRule"/>
</dbReference>
<dbReference type="GO" id="GO:0015293">
    <property type="term" value="F:symporter activity"/>
    <property type="evidence" value="ECO:0007669"/>
    <property type="project" value="UniProtKB-UniRule"/>
</dbReference>
<dbReference type="HAMAP" id="MF_01522">
    <property type="entry name" value="Kup"/>
    <property type="match status" value="1"/>
</dbReference>
<dbReference type="InterPro" id="IPR003855">
    <property type="entry name" value="K+_transporter"/>
</dbReference>
<dbReference type="InterPro" id="IPR053952">
    <property type="entry name" value="K_trans_C"/>
</dbReference>
<dbReference type="InterPro" id="IPR053951">
    <property type="entry name" value="K_trans_N"/>
</dbReference>
<dbReference type="InterPro" id="IPR023051">
    <property type="entry name" value="Kup"/>
</dbReference>
<dbReference type="PANTHER" id="PTHR30540:SF79">
    <property type="entry name" value="LOW AFFINITY POTASSIUM TRANSPORT SYSTEM PROTEIN KUP"/>
    <property type="match status" value="1"/>
</dbReference>
<dbReference type="PANTHER" id="PTHR30540">
    <property type="entry name" value="OSMOTIC STRESS POTASSIUM TRANSPORTER"/>
    <property type="match status" value="1"/>
</dbReference>
<dbReference type="Pfam" id="PF02705">
    <property type="entry name" value="K_trans"/>
    <property type="match status" value="1"/>
</dbReference>
<dbReference type="Pfam" id="PF22776">
    <property type="entry name" value="K_trans_C"/>
    <property type="match status" value="1"/>
</dbReference>
<feature type="chain" id="PRO_1000185111" description="Probable potassium transport system protein Kup">
    <location>
        <begin position="1"/>
        <end position="633"/>
    </location>
</feature>
<feature type="transmembrane region" description="Helical" evidence="1">
    <location>
        <begin position="21"/>
        <end position="41"/>
    </location>
</feature>
<feature type="transmembrane region" description="Helical" evidence="1">
    <location>
        <begin position="61"/>
        <end position="81"/>
    </location>
</feature>
<feature type="transmembrane region" description="Helical" evidence="1">
    <location>
        <begin position="107"/>
        <end position="127"/>
    </location>
</feature>
<feature type="transmembrane region" description="Helical" evidence="1">
    <location>
        <begin position="145"/>
        <end position="165"/>
    </location>
</feature>
<feature type="transmembrane region" description="Helical" evidence="1">
    <location>
        <begin position="176"/>
        <end position="196"/>
    </location>
</feature>
<feature type="transmembrane region" description="Helical" evidence="1">
    <location>
        <begin position="219"/>
        <end position="239"/>
    </location>
</feature>
<feature type="transmembrane region" description="Helical" evidence="1">
    <location>
        <begin position="255"/>
        <end position="275"/>
    </location>
</feature>
<feature type="transmembrane region" description="Helical" evidence="1">
    <location>
        <begin position="293"/>
        <end position="313"/>
    </location>
</feature>
<feature type="transmembrane region" description="Helical" evidence="1">
    <location>
        <begin position="345"/>
        <end position="365"/>
    </location>
</feature>
<feature type="transmembrane region" description="Helical" evidence="1">
    <location>
        <begin position="371"/>
        <end position="391"/>
    </location>
</feature>
<feature type="transmembrane region" description="Helical" evidence="1">
    <location>
        <begin position="402"/>
        <end position="422"/>
    </location>
</feature>
<feature type="transmembrane region" description="Helical" evidence="1">
    <location>
        <begin position="427"/>
        <end position="447"/>
    </location>
</feature>
<reference key="1">
    <citation type="journal article" date="2009" name="J. Bacteriol.">
        <title>Genome sequences of three Agrobacterium biovars help elucidate the evolution of multichromosome genomes in bacteria.</title>
        <authorList>
            <person name="Slater S.C."/>
            <person name="Goldman B.S."/>
            <person name="Goodner B."/>
            <person name="Setubal J.C."/>
            <person name="Farrand S.K."/>
            <person name="Nester E.W."/>
            <person name="Burr T.J."/>
            <person name="Banta L."/>
            <person name="Dickerman A.W."/>
            <person name="Paulsen I."/>
            <person name="Otten L."/>
            <person name="Suen G."/>
            <person name="Welch R."/>
            <person name="Almeida N.F."/>
            <person name="Arnold F."/>
            <person name="Burton O.T."/>
            <person name="Du Z."/>
            <person name="Ewing A."/>
            <person name="Godsy E."/>
            <person name="Heisel S."/>
            <person name="Houmiel K.L."/>
            <person name="Jhaveri J."/>
            <person name="Lu J."/>
            <person name="Miller N.M."/>
            <person name="Norton S."/>
            <person name="Chen Q."/>
            <person name="Phoolcharoen W."/>
            <person name="Ohlin V."/>
            <person name="Ondrusek D."/>
            <person name="Pride N."/>
            <person name="Stricklin S.L."/>
            <person name="Sun J."/>
            <person name="Wheeler C."/>
            <person name="Wilson L."/>
            <person name="Zhu H."/>
            <person name="Wood D.W."/>
        </authorList>
    </citation>
    <scope>NUCLEOTIDE SEQUENCE [LARGE SCALE GENOMIC DNA]</scope>
    <source>
        <strain>K84 / ATCC BAA-868</strain>
    </source>
</reference>
<name>KUP_RHIR8</name>
<comment type="function">
    <text evidence="1">Transport of potassium into the cell. Likely operates as a K(+):H(+) symporter.</text>
</comment>
<comment type="catalytic activity">
    <reaction evidence="1">
        <text>K(+)(in) + H(+)(in) = K(+)(out) + H(+)(out)</text>
        <dbReference type="Rhea" id="RHEA:28490"/>
        <dbReference type="ChEBI" id="CHEBI:15378"/>
        <dbReference type="ChEBI" id="CHEBI:29103"/>
    </reaction>
    <physiologicalReaction direction="right-to-left" evidence="1">
        <dbReference type="Rhea" id="RHEA:28492"/>
    </physiologicalReaction>
</comment>
<comment type="subcellular location">
    <subcellularLocation>
        <location evidence="1">Cell inner membrane</location>
        <topology evidence="1">Multi-pass membrane protein</topology>
    </subcellularLocation>
</comment>
<comment type="similarity">
    <text evidence="1">Belongs to the HAK/KUP transporter (TC 2.A.72) family.</text>
</comment>
<proteinExistence type="inferred from homology"/>
<organism>
    <name type="scientific">Rhizobium rhizogenes (strain K84 / ATCC BAA-868)</name>
    <name type="common">Agrobacterium radiobacter</name>
    <dbReference type="NCBI Taxonomy" id="311403"/>
    <lineage>
        <taxon>Bacteria</taxon>
        <taxon>Pseudomonadati</taxon>
        <taxon>Pseudomonadota</taxon>
        <taxon>Alphaproteobacteria</taxon>
        <taxon>Hyphomicrobiales</taxon>
        <taxon>Rhizobiaceae</taxon>
        <taxon>Rhizobium/Agrobacterium group</taxon>
        <taxon>Rhizobium</taxon>
    </lineage>
</organism>
<gene>
    <name evidence="1" type="primary">kup</name>
    <name type="ordered locus">Arad_1113</name>
</gene>
<keyword id="KW-0997">Cell inner membrane</keyword>
<keyword id="KW-1003">Cell membrane</keyword>
<keyword id="KW-0406">Ion transport</keyword>
<keyword id="KW-0472">Membrane</keyword>
<keyword id="KW-0630">Potassium</keyword>
<keyword id="KW-0633">Potassium transport</keyword>
<keyword id="KW-0769">Symport</keyword>
<keyword id="KW-0812">Transmembrane</keyword>
<keyword id="KW-1133">Transmembrane helix</keyword>
<keyword id="KW-0813">Transport</keyword>
<evidence type="ECO:0000255" key="1">
    <source>
        <dbReference type="HAMAP-Rule" id="MF_01522"/>
    </source>
</evidence>
<sequence>MSDETHHSPDGKMSIRKLSYLAVGSVGVVYGDIGTSPLYAFREALKPVAADGLTRGEVISLVSLMFWALTIIVTMKYVLFLLRADNDGEGGTLSLLALLMKTANGHTAVLMLLGLLGAALFLGDAMITPALSVLSAVEGLKLVTPTLSDYIVPISVAILALLFAIQSHGTGAVARFFGPITAIWFIVMGLAGIMHIADDYGILAALNPWYAVNFLMNEGFLGVVVLGAVFLTVTGAEALYADLGHFGRRPIQWAWFVLVFPSLTLNYLGQGALVLREPLAMSDPFFLMYPHWALLPVVILATMATIIASQAVITGAFSLTRQAIHLGFLPRMEILITSETNTGQIFLPSVNAILFFGVIFLVLSFKTSDALATAYGISVTGAMVVTSIMAFEFVRVRWNWTLPMAIAVLTPLLLLEFVFLGANLLKIHDGGYVPVLIATAFTVIMWTWRRGSAILMEKTRHTDIPLSSFVSSIERKSDHSPAHVPGTAIFLTSDPESAPAALLHNLKHNHVLHDKNVILTIRTTNKPRVPQEDRYSVEKVSDRFSRVELRFGFMESQNVSQALATLRKTGLKFDIMSTSFYLGRRKLVPDAKSGMPHWQDRLYIALANAATDPSDYFRLPANRVVELGSHVII</sequence>
<accession>B9JA25</accession>